<comment type="similarity">
    <text evidence="1">Belongs to the TCL1 family.</text>
</comment>
<evidence type="ECO:0000305" key="1"/>
<keyword id="KW-1185">Reference proteome</keyword>
<accession>P56841</accession>
<reference key="1">
    <citation type="journal article" date="1999" name="Proc. Natl. Acad. Sci. U.S.A.">
        <title>Genomic analysis of human and mouse TCL1 loci reveals a complex of tightly clustered genes.</title>
        <authorList>
            <person name="Hallas C."/>
            <person name="Pekarsky Y."/>
            <person name="Itoyama T."/>
            <person name="Varnum J."/>
            <person name="Bichi R."/>
            <person name="Rothstein J.L."/>
            <person name="Croce C.M."/>
        </authorList>
    </citation>
    <scope>NUCLEOTIDE SEQUENCE [MRNA]</scope>
</reference>
<proteinExistence type="inferred from homology"/>
<dbReference type="EMBL" id="AF195489">
    <property type="protein sequence ID" value="AAF12802.1"/>
    <property type="molecule type" value="mRNA"/>
</dbReference>
<dbReference type="CCDS" id="CCDS36544.1"/>
<dbReference type="RefSeq" id="NP_038803.1">
    <property type="nucleotide sequence ID" value="NM_013775.2"/>
</dbReference>
<dbReference type="SMR" id="P56841"/>
<dbReference type="FunCoup" id="P56841">
    <property type="interactions" value="337"/>
</dbReference>
<dbReference type="STRING" id="10090.ENSMUSP00000080115"/>
<dbReference type="PaxDb" id="10090-ENSMUSP00000080115"/>
<dbReference type="DNASU" id="27381"/>
<dbReference type="Ensembl" id="ENSMUST00000081379.7">
    <property type="protein sequence ID" value="ENSMUSP00000080115.7"/>
    <property type="gene ID" value="ENSMUSG00000060863.13"/>
</dbReference>
<dbReference type="Ensembl" id="ENSMUST00000146174.8">
    <property type="protein sequence ID" value="ENSMUSP00000121354.2"/>
    <property type="gene ID" value="ENSMUSG00000060863.13"/>
</dbReference>
<dbReference type="GeneID" id="27381"/>
<dbReference type="KEGG" id="mmu:27381"/>
<dbReference type="UCSC" id="uc007oxv.1">
    <property type="organism name" value="mouse"/>
</dbReference>
<dbReference type="AGR" id="MGI:1351609"/>
<dbReference type="CTD" id="27381"/>
<dbReference type="MGI" id="MGI:1351609">
    <property type="gene designation" value="Tcl1b2"/>
</dbReference>
<dbReference type="VEuPathDB" id="HostDB:ENSMUSG00000060863"/>
<dbReference type="eggNOG" id="ENOG502TEDJ">
    <property type="taxonomic scope" value="Eukaryota"/>
</dbReference>
<dbReference type="GeneTree" id="ENSGT00390000006885"/>
<dbReference type="InParanoid" id="P56841"/>
<dbReference type="OrthoDB" id="9630488at2759"/>
<dbReference type="PhylomeDB" id="P56841"/>
<dbReference type="TreeFam" id="TF340217"/>
<dbReference type="BioGRID-ORCS" id="27381">
    <property type="hits" value="0 hits in 76 CRISPR screens"/>
</dbReference>
<dbReference type="ChiTaRS" id="Tcl1b2">
    <property type="organism name" value="mouse"/>
</dbReference>
<dbReference type="PRO" id="PR:P56841"/>
<dbReference type="Proteomes" id="UP000000589">
    <property type="component" value="Chromosome 12"/>
</dbReference>
<dbReference type="RNAct" id="P56841">
    <property type="molecule type" value="protein"/>
</dbReference>
<dbReference type="Bgee" id="ENSMUSG00000060863">
    <property type="expression patterns" value="Expressed in animal zygote and 8 other cell types or tissues"/>
</dbReference>
<dbReference type="ExpressionAtlas" id="P56841">
    <property type="expression patterns" value="baseline and differential"/>
</dbReference>
<dbReference type="GO" id="GO:0043539">
    <property type="term" value="F:protein serine/threonine kinase activator activity"/>
    <property type="evidence" value="ECO:0007669"/>
    <property type="project" value="InterPro"/>
</dbReference>
<dbReference type="FunFam" id="2.40.15.10:FF:000004">
    <property type="entry name" value="Protein TCL1B4"/>
    <property type="match status" value="1"/>
</dbReference>
<dbReference type="Gene3D" id="2.40.15.10">
    <property type="entry name" value="TCL1/MTCP1"/>
    <property type="match status" value="1"/>
</dbReference>
<dbReference type="InterPro" id="IPR004832">
    <property type="entry name" value="TCL1_MTCP1"/>
</dbReference>
<dbReference type="InterPro" id="IPR036672">
    <property type="entry name" value="TCL1_MTCP1_sf"/>
</dbReference>
<dbReference type="PANTHER" id="PTHR14060">
    <property type="entry name" value="PROTEIN P13 MTCP-1"/>
    <property type="match status" value="1"/>
</dbReference>
<dbReference type="PANTHER" id="PTHR14060:SF2">
    <property type="entry name" value="T-CELL LEUKEMIA_LYMPHOMA PROTEIN 1B"/>
    <property type="match status" value="1"/>
</dbReference>
<dbReference type="Pfam" id="PF01840">
    <property type="entry name" value="TCL1_MTCP1"/>
    <property type="match status" value="1"/>
</dbReference>
<dbReference type="SUPFAM" id="SSF50904">
    <property type="entry name" value="Oncogene products"/>
    <property type="match status" value="1"/>
</dbReference>
<feature type="chain" id="PRO_0000184492" description="Protein TCL1B2">
    <location>
        <begin position="1"/>
        <end position="117"/>
    </location>
</feature>
<name>TCLB2_MOUSE</name>
<protein>
    <recommendedName>
        <fullName>Protein TCL1B2</fullName>
    </recommendedName>
</protein>
<organism>
    <name type="scientific">Mus musculus</name>
    <name type="common">Mouse</name>
    <dbReference type="NCBI Taxonomy" id="10090"/>
    <lineage>
        <taxon>Eukaryota</taxon>
        <taxon>Metazoa</taxon>
        <taxon>Chordata</taxon>
        <taxon>Craniata</taxon>
        <taxon>Vertebrata</taxon>
        <taxon>Euteleostomi</taxon>
        <taxon>Mammalia</taxon>
        <taxon>Eutheria</taxon>
        <taxon>Euarchontoglires</taxon>
        <taxon>Glires</taxon>
        <taxon>Rodentia</taxon>
        <taxon>Myomorpha</taxon>
        <taxon>Muroidea</taxon>
        <taxon>Muridae</taxon>
        <taxon>Murinae</taxon>
        <taxon>Mus</taxon>
        <taxon>Mus</taxon>
    </lineage>
</organism>
<gene>
    <name type="primary">Tcl1b2</name>
</gene>
<sequence>MAAAGFYPPRLLPQVLISTGPGFYEDEHHRLWMVAKLETCSHSPYCNKIETCVTVHLWQMTRYPQEPAPYNPMNYNFLPMTWRLASMNTYRGTDAMHWRLLNHSQVGDTVQLILMLE</sequence>